<proteinExistence type="evidence at protein level"/>
<accession>Q71V39</accession>
<name>EF1A2_RABIT</name>
<protein>
    <recommendedName>
        <fullName>Elongation factor 1-alpha 2</fullName>
        <shortName>EF-1-alpha-2</shortName>
        <ecNumber evidence="6 7">3.6.5.-</ecNumber>
    </recommendedName>
    <alternativeName>
        <fullName evidence="9">Eukaryotic elongation factor 1 A-2</fullName>
        <shortName>eEF1A-2</shortName>
    </alternativeName>
    <alternativeName>
        <fullName>Statin-S1</fullName>
    </alternativeName>
</protein>
<keyword id="KW-0002">3D-structure</keyword>
<keyword id="KW-0007">Acetylation</keyword>
<keyword id="KW-0903">Direct protein sequencing</keyword>
<keyword id="KW-0251">Elongation factor</keyword>
<keyword id="KW-0256">Endoplasmic reticulum</keyword>
<keyword id="KW-0342">GTP-binding</keyword>
<keyword id="KW-0378">Hydrolase</keyword>
<keyword id="KW-0472">Membrane</keyword>
<keyword id="KW-0488">Methylation</keyword>
<keyword id="KW-0547">Nucleotide-binding</keyword>
<keyword id="KW-0597">Phosphoprotein</keyword>
<keyword id="KW-0648">Protein biosynthesis</keyword>
<keyword id="KW-1185">Reference proteome</keyword>
<organism>
    <name type="scientific">Oryctolagus cuniculus</name>
    <name type="common">Rabbit</name>
    <dbReference type="NCBI Taxonomy" id="9986"/>
    <lineage>
        <taxon>Eukaryota</taxon>
        <taxon>Metazoa</taxon>
        <taxon>Chordata</taxon>
        <taxon>Craniata</taxon>
        <taxon>Vertebrata</taxon>
        <taxon>Euteleostomi</taxon>
        <taxon>Mammalia</taxon>
        <taxon>Eutheria</taxon>
        <taxon>Euarchontoglires</taxon>
        <taxon>Glires</taxon>
        <taxon>Lagomorpha</taxon>
        <taxon>Leporidae</taxon>
        <taxon>Oryctolagus</taxon>
    </lineage>
</organism>
<reference key="1">
    <citation type="journal article" date="1998" name="Nucleic Acids Res.">
        <title>The elongation factor 1 A-2 isoform from rabbit: cloning of the cDNA and characterization of the protein.</title>
        <authorList>
            <person name="Kahns S."/>
            <person name="Lund A."/>
            <person name="Kristensen P."/>
            <person name="Knudsen C.R."/>
            <person name="Clark B.F.C."/>
            <person name="Cavallius J."/>
            <person name="Merrick W.C."/>
        </authorList>
    </citation>
    <scope>NUCLEOTIDE SEQUENCE [MRNA]</scope>
    <scope>PARTIAL PROTEIN SEQUENCE</scope>
    <scope>FUNCTION</scope>
    <scope>TISSUE SPECIFICITY</scope>
    <scope>METHYLATION AT LYS-55 AND LYS-165</scope>
    <scope>ETHANOLAMINYLATION AT GLU-301 AND GLU-374</scope>
    <scope>SUBCELLULAR LOCATION</scope>
    <source>
        <tissue>Skeletal muscle</tissue>
    </source>
</reference>
<reference evidence="11" key="2">
    <citation type="journal article" date="2014" name="Nucleic Acids Res.">
        <title>Mammalian translation elongation factor eEF1A2: X-ray structure and new features of GDP/GTP exchange mechanism in higher eukaryotes.</title>
        <authorList>
            <person name="Crepin T."/>
            <person name="Shalak V.F."/>
            <person name="Yaremchuk A.D."/>
            <person name="Vlasenko D.O."/>
            <person name="McCarthy A."/>
            <person name="Negrutskii B.S."/>
            <person name="Tukalo M.A."/>
            <person name="El'skaya A.V."/>
        </authorList>
    </citation>
    <scope>X-RAY CRYSTALLOGRAPHY (2.70 ANGSTROMS) IN COMPLEX WITH GDP AND MAGNESIUM</scope>
    <scope>SUBUNIT</scope>
    <scope>PHOSPHORYLATION AT SER-163 AND THR-239</scope>
</reference>
<feature type="initiator methionine" description="Removed">
    <location>
        <position position="1"/>
    </location>
</feature>
<feature type="chain" id="PRO_0000090893" description="Elongation factor 1-alpha 2">
    <location>
        <begin position="2"/>
        <end position="463"/>
    </location>
</feature>
<feature type="domain" description="tr-type G">
    <location>
        <begin position="5"/>
        <end position="242"/>
    </location>
</feature>
<feature type="region of interest" description="G1" evidence="4">
    <location>
        <begin position="14"/>
        <end position="21"/>
    </location>
</feature>
<feature type="region of interest" description="G2" evidence="4">
    <location>
        <begin position="70"/>
        <end position="74"/>
    </location>
</feature>
<feature type="region of interest" description="G3" evidence="4">
    <location>
        <begin position="91"/>
        <end position="94"/>
    </location>
</feature>
<feature type="region of interest" description="G4" evidence="4">
    <location>
        <begin position="153"/>
        <end position="156"/>
    </location>
</feature>
<feature type="region of interest" description="G5" evidence="4">
    <location>
        <begin position="194"/>
        <end position="196"/>
    </location>
</feature>
<feature type="region of interest" description="Disordered" evidence="5">
    <location>
        <begin position="444"/>
        <end position="463"/>
    </location>
</feature>
<feature type="binding site" evidence="6 11">
    <location>
        <position position="17"/>
    </location>
    <ligand>
        <name>GTP</name>
        <dbReference type="ChEBI" id="CHEBI:37565"/>
    </ligand>
</feature>
<feature type="binding site" evidence="6 11">
    <location>
        <position position="17"/>
    </location>
    <ligand>
        <name>Mg(2+)</name>
        <dbReference type="ChEBI" id="CHEBI:18420"/>
    </ligand>
</feature>
<feature type="binding site" evidence="6 11">
    <location>
        <position position="18"/>
    </location>
    <ligand>
        <name>GTP</name>
        <dbReference type="ChEBI" id="CHEBI:37565"/>
    </ligand>
</feature>
<feature type="binding site" evidence="6 11">
    <location>
        <position position="19"/>
    </location>
    <ligand>
        <name>GTP</name>
        <dbReference type="ChEBI" id="CHEBI:37565"/>
    </ligand>
</feature>
<feature type="binding site" evidence="6 11">
    <location>
        <position position="20"/>
    </location>
    <ligand>
        <name>GTP</name>
        <dbReference type="ChEBI" id="CHEBI:37565"/>
    </ligand>
</feature>
<feature type="binding site" evidence="6 11">
    <location>
        <position position="21"/>
    </location>
    <ligand>
        <name>GTP</name>
        <dbReference type="ChEBI" id="CHEBI:37565"/>
    </ligand>
</feature>
<feature type="binding site" evidence="6 11">
    <location>
        <position position="22"/>
    </location>
    <ligand>
        <name>GTP</name>
        <dbReference type="ChEBI" id="CHEBI:37565"/>
    </ligand>
</feature>
<feature type="binding site" evidence="6 11">
    <location>
        <position position="153"/>
    </location>
    <ligand>
        <name>GTP</name>
        <dbReference type="ChEBI" id="CHEBI:37565"/>
    </ligand>
</feature>
<feature type="binding site" evidence="6 11">
    <location>
        <position position="154"/>
    </location>
    <ligand>
        <name>GTP</name>
        <dbReference type="ChEBI" id="CHEBI:37565"/>
    </ligand>
</feature>
<feature type="binding site" evidence="6 11">
    <location>
        <position position="156"/>
    </location>
    <ligand>
        <name>GTP</name>
        <dbReference type="ChEBI" id="CHEBI:37565"/>
    </ligand>
</feature>
<feature type="binding site" evidence="6 11">
    <location>
        <position position="194"/>
    </location>
    <ligand>
        <name>GTP</name>
        <dbReference type="ChEBI" id="CHEBI:37565"/>
    </ligand>
</feature>
<feature type="binding site" evidence="6 11">
    <location>
        <position position="195"/>
    </location>
    <ligand>
        <name>GTP</name>
        <dbReference type="ChEBI" id="CHEBI:37565"/>
    </ligand>
</feature>
<feature type="binding site" evidence="6 11">
    <location>
        <position position="196"/>
    </location>
    <ligand>
        <name>GTP</name>
        <dbReference type="ChEBI" id="CHEBI:37565"/>
    </ligand>
</feature>
<feature type="modified residue" description="N,N,N-trimethylglycine" evidence="2">
    <location>
        <position position="2"/>
    </location>
</feature>
<feature type="modified residue" description="N6,N6,N6-trimethyllysine; alternate" evidence="3">
    <location>
        <position position="36"/>
    </location>
</feature>
<feature type="modified residue" description="N6,N6-dimethyllysine; alternate" evidence="3">
    <location>
        <position position="36"/>
    </location>
</feature>
<feature type="modified residue" description="N6-methyllysine; alternate" evidence="3">
    <location>
        <position position="36"/>
    </location>
</feature>
<feature type="modified residue" description="N6,N6,N6-trimethyllysine" evidence="7">
    <location>
        <position position="55"/>
    </location>
</feature>
<feature type="modified residue" description="N6,N6-dimethyllysine" evidence="3">
    <location>
        <position position="55"/>
    </location>
</feature>
<feature type="modified residue" description="N6,N6,N6-trimethyllysine" evidence="3">
    <location>
        <position position="79"/>
    </location>
</feature>
<feature type="modified residue" description="Phosphoserine" evidence="6 11">
    <location>
        <position position="163"/>
    </location>
</feature>
<feature type="modified residue" description="N6,N6,N6-trimethyllysine; alternate; by EEF1AKMT3" evidence="7">
    <location>
        <position position="165"/>
    </location>
</feature>
<feature type="modified residue" description="N6,N6-dimethyllysine; alternate" evidence="3">
    <location>
        <position position="165"/>
    </location>
</feature>
<feature type="modified residue" description="N6-methyllysine; alternate" evidence="3">
    <location>
        <position position="165"/>
    </location>
</feature>
<feature type="modified residue" description="N6-acetyllysine" evidence="3">
    <location>
        <position position="179"/>
    </location>
</feature>
<feature type="modified residue" description="Phosphoserine" evidence="1">
    <location>
        <position position="224"/>
    </location>
</feature>
<feature type="modified residue" description="Phosphothreonine" evidence="6 11">
    <location>
        <position position="239"/>
    </location>
</feature>
<feature type="modified residue" description="5-glutamyl glycerylphosphorylethanolamine" evidence="7">
    <location>
        <position position="301"/>
    </location>
</feature>
<feature type="modified residue" description="5-glutamyl glycerylphosphorylethanolamine" evidence="7">
    <location>
        <position position="374"/>
    </location>
</feature>
<feature type="modified residue" description="N6-acetyllysine" evidence="3">
    <location>
        <position position="439"/>
    </location>
</feature>
<feature type="strand" evidence="12">
    <location>
        <begin position="6"/>
        <end position="15"/>
    </location>
</feature>
<feature type="helix" evidence="12">
    <location>
        <begin position="20"/>
        <end position="30"/>
    </location>
</feature>
<feature type="helix" evidence="12">
    <location>
        <begin position="36"/>
        <end position="49"/>
    </location>
</feature>
<feature type="strand" evidence="12">
    <location>
        <begin position="54"/>
        <end position="56"/>
    </location>
</feature>
<feature type="helix" evidence="12">
    <location>
        <begin position="58"/>
        <end position="66"/>
    </location>
</feature>
<feature type="strand" evidence="12">
    <location>
        <begin position="68"/>
        <end position="70"/>
    </location>
</feature>
<feature type="helix" evidence="12">
    <location>
        <begin position="76"/>
        <end position="78"/>
    </location>
</feature>
<feature type="strand" evidence="12">
    <location>
        <begin position="79"/>
        <end position="81"/>
    </location>
</feature>
<feature type="strand" evidence="12">
    <location>
        <begin position="83"/>
        <end position="91"/>
    </location>
</feature>
<feature type="strand" evidence="12">
    <location>
        <begin position="93"/>
        <end position="95"/>
    </location>
</feature>
<feature type="helix" evidence="12">
    <location>
        <begin position="98"/>
        <end position="103"/>
    </location>
</feature>
<feature type="strand" evidence="12">
    <location>
        <begin position="105"/>
        <end position="107"/>
    </location>
</feature>
<feature type="strand" evidence="12">
    <location>
        <begin position="110"/>
        <end position="118"/>
    </location>
</feature>
<feature type="helix" evidence="12">
    <location>
        <begin position="122"/>
        <end position="126"/>
    </location>
</feature>
<feature type="helix" evidence="12">
    <location>
        <begin position="132"/>
        <end position="142"/>
    </location>
</feature>
<feature type="strand" evidence="12">
    <location>
        <begin position="148"/>
        <end position="153"/>
    </location>
</feature>
<feature type="helix" evidence="12">
    <location>
        <begin position="155"/>
        <end position="157"/>
    </location>
</feature>
<feature type="strand" evidence="12">
    <location>
        <begin position="158"/>
        <end position="160"/>
    </location>
</feature>
<feature type="helix" evidence="12">
    <location>
        <begin position="164"/>
        <end position="181"/>
    </location>
</feature>
<feature type="helix" evidence="12">
    <location>
        <begin position="185"/>
        <end position="187"/>
    </location>
</feature>
<feature type="strand" evidence="12">
    <location>
        <begin position="190"/>
        <end position="192"/>
    </location>
</feature>
<feature type="turn" evidence="12">
    <location>
        <begin position="195"/>
        <end position="198"/>
    </location>
</feature>
<feature type="strand" evidence="12">
    <location>
        <begin position="201"/>
        <end position="203"/>
    </location>
</feature>
<feature type="strand" evidence="12">
    <location>
        <begin position="214"/>
        <end position="216"/>
    </location>
</feature>
<feature type="strand" evidence="12">
    <location>
        <begin position="223"/>
        <end position="227"/>
    </location>
</feature>
<feature type="helix" evidence="12">
    <location>
        <begin position="228"/>
        <end position="232"/>
    </location>
</feature>
<feature type="helix" evidence="12">
    <location>
        <begin position="241"/>
        <end position="243"/>
    </location>
</feature>
<feature type="strand" evidence="12">
    <location>
        <begin position="247"/>
        <end position="249"/>
    </location>
</feature>
<feature type="strand" evidence="12">
    <location>
        <begin position="251"/>
        <end position="256"/>
    </location>
</feature>
<feature type="turn" evidence="12">
    <location>
        <begin position="257"/>
        <end position="259"/>
    </location>
</feature>
<feature type="strand" evidence="12">
    <location>
        <begin position="260"/>
        <end position="265"/>
    </location>
</feature>
<feature type="strand" evidence="12">
    <location>
        <begin position="277"/>
        <end position="281"/>
    </location>
</feature>
<feature type="turn" evidence="12">
    <location>
        <begin position="282"/>
        <end position="284"/>
    </location>
</feature>
<feature type="strand" evidence="12">
    <location>
        <begin position="285"/>
        <end position="298"/>
    </location>
</feature>
<feature type="strand" evidence="12">
    <location>
        <begin position="308"/>
        <end position="312"/>
    </location>
</feature>
<feature type="helix" evidence="12">
    <location>
        <begin position="317"/>
        <end position="319"/>
    </location>
</feature>
<feature type="strand" evidence="12">
    <location>
        <begin position="325"/>
        <end position="332"/>
    </location>
</feature>
<feature type="strand" evidence="12">
    <location>
        <begin position="337"/>
        <end position="346"/>
    </location>
</feature>
<feature type="strand" evidence="12">
    <location>
        <begin position="360"/>
        <end position="363"/>
    </location>
</feature>
<feature type="strand" evidence="12">
    <location>
        <begin position="366"/>
        <end position="379"/>
    </location>
</feature>
<feature type="turn" evidence="12">
    <location>
        <begin position="381"/>
        <end position="383"/>
    </location>
</feature>
<feature type="strand" evidence="12">
    <location>
        <begin position="386"/>
        <end position="390"/>
    </location>
</feature>
<feature type="strand" evidence="12">
    <location>
        <begin position="392"/>
        <end position="394"/>
    </location>
</feature>
<feature type="strand" evidence="12">
    <location>
        <begin position="399"/>
        <end position="408"/>
    </location>
</feature>
<feature type="turn" evidence="12">
    <location>
        <begin position="415"/>
        <end position="417"/>
    </location>
</feature>
<feature type="helix" evidence="12">
    <location>
        <begin position="419"/>
        <end position="421"/>
    </location>
</feature>
<feature type="strand" evidence="12">
    <location>
        <begin position="423"/>
        <end position="428"/>
    </location>
</feature>
<feature type="strand" evidence="12">
    <location>
        <begin position="431"/>
        <end position="443"/>
    </location>
</feature>
<feature type="helix" evidence="12">
    <location>
        <begin position="453"/>
        <end position="458"/>
    </location>
</feature>
<sequence>MGKEKTHINIVVIGHVDSGKSTTTGHLIYKCGGIDKRTIEKFEKEAAEMGKGSFKYAWVLDKLKAERERGITIDISLWKFETTKYYITIIDAPGHRDFIKNMITGTSQADCAVLIVAAGVGEFEAGISKNGQTREHALLAYTLGVKQLIVGVNKMDSTEPAYSEKRYDEIVKEVSAYIKKIGYNPATVPFVPISGWHGDNMLEPSPNMPWFKGWKVERKEGNASGVSLLEALDTILPPTRPTDKPLRLPLQDVYKIGGIGTVPVGRVETGILRPGMVVTFAPVNITTEVKSVEMHHEALSEALPGDNVGFNVKNVSVKDIRRGNVCGDSKSDPPQEAAQFTSQVIILNHPGQISAGYSPVIDCHTAHIACKFAELKEKIDRRSGKKLEDNPKSLKSGDAAIVEMVPGKPMCVESFSQYPPLGRFAVRDMRQTVAVGVIKNVEKKSGGAGKVTKSAQKAQKAGK</sequence>
<gene>
    <name evidence="8" type="primary">EEF1A2</name>
</gene>
<evidence type="ECO:0000250" key="1">
    <source>
        <dbReference type="UniProtKB" id="P62632"/>
    </source>
</evidence>
<evidence type="ECO:0000250" key="2">
    <source>
        <dbReference type="UniProtKB" id="P68104"/>
    </source>
</evidence>
<evidence type="ECO:0000250" key="3">
    <source>
        <dbReference type="UniProtKB" id="Q05639"/>
    </source>
</evidence>
<evidence type="ECO:0000255" key="4"/>
<evidence type="ECO:0000256" key="5">
    <source>
        <dbReference type="SAM" id="MobiDB-lite"/>
    </source>
</evidence>
<evidence type="ECO:0000269" key="6">
    <source>
    </source>
</evidence>
<evidence type="ECO:0000269" key="7">
    <source>
    </source>
</evidence>
<evidence type="ECO:0000303" key="8">
    <source>
    </source>
</evidence>
<evidence type="ECO:0000303" key="9">
    <source>
    </source>
</evidence>
<evidence type="ECO:0000305" key="10"/>
<evidence type="ECO:0007744" key="11">
    <source>
        <dbReference type="PDB" id="4C0S"/>
    </source>
</evidence>
<evidence type="ECO:0007829" key="12">
    <source>
        <dbReference type="PDB" id="6RA9"/>
    </source>
</evidence>
<comment type="function">
    <text evidence="2 6 7">Translation elongation factor that catalyzes the GTP-dependent binding of aminoacyl-tRNA (aa-tRNA) to the A-site of ribosomes during the elongation phase of protein synthesis (PubMed:25326326, PubMed:9518480). Base pairing between the mRNA codon and the aa-tRNA anticodon promotes GTP hydrolysis, releasing the aa-tRNA from EEF1A1 and allowing its accommodation into the ribosome (PubMed:25326326, PubMed:9518480). The growing protein chain is subsequently transferred from the P-site peptidyl tRNA to the A-site aa-tRNA, extending it by one amino acid through ribosome-catalyzed peptide bond formation (By similarity).</text>
</comment>
<comment type="catalytic activity">
    <reaction evidence="6 7">
        <text>GTP + H2O = GDP + phosphate + H(+)</text>
        <dbReference type="Rhea" id="RHEA:19669"/>
        <dbReference type="ChEBI" id="CHEBI:15377"/>
        <dbReference type="ChEBI" id="CHEBI:15378"/>
        <dbReference type="ChEBI" id="CHEBI:37565"/>
        <dbReference type="ChEBI" id="CHEBI:43474"/>
        <dbReference type="ChEBI" id="CHEBI:58189"/>
    </reaction>
    <physiologicalReaction direction="left-to-right" evidence="6 7">
        <dbReference type="Rhea" id="RHEA:19670"/>
    </physiologicalReaction>
</comment>
<comment type="subunit">
    <text evidence="6">Homodimer; arranged in a 'head to tail' dimer configuration.</text>
</comment>
<comment type="interaction">
    <interactant intactId="EBI-7645815">
        <id>Q71V39</id>
    </interactant>
    <interactant intactId="EBI-79387">
        <id>P19174</id>
        <label>PLCG1</label>
    </interactant>
    <organismsDiffer>true</organismsDiffer>
    <experiments>3</experiments>
</comment>
<comment type="interaction">
    <interactant intactId="EBI-7645815">
        <id>Q71V39</id>
    </interactant>
    <interactant intactId="EBI-297779">
        <id>Q06124</id>
        <label>PTPN11</label>
    </interactant>
    <organismsDiffer>true</organismsDiffer>
    <experiments>2</experiments>
</comment>
<comment type="subcellular location">
    <subcellularLocation>
        <location evidence="3">Endoplasmic reticulum membrane</location>
    </subcellularLocation>
</comment>
<comment type="tissue specificity">
    <text evidence="7">Expressed in skeletal muscle, heart, brain and aorta. Not expressed in liver, kidney, spleen and lung.</text>
</comment>
<comment type="PTM">
    <text evidence="3">Trimethylated at Lys-165 by EEF1AKMT3. Mono-, di-, and trimethylated at Lys-36 by EEF1AKMT4; trimethylated form is predominant. Methylation by EEF1AKMT4 contributes to the fine-tuning of translation rates for a subset of tRNAs (By similarity). Trimethylated at the N-terminus and dimethylated at Lys-55 by METTL13 (By similarity).</text>
</comment>
<comment type="similarity">
    <text evidence="10">Belongs to the TRAFAC class translation factor GTPase superfamily. Classic translation factor GTPase family. EF-Tu/EF-1A subfamily.</text>
</comment>
<dbReference type="EC" id="3.6.5.-" evidence="6 7"/>
<dbReference type="EMBL" id="AF035178">
    <property type="protein sequence ID" value="AAC39252.1"/>
    <property type="molecule type" value="mRNA"/>
</dbReference>
<dbReference type="RefSeq" id="NP_001075500.1">
    <property type="nucleotide sequence ID" value="NM_001082031.1"/>
</dbReference>
<dbReference type="RefSeq" id="XP_069907364.1">
    <property type="nucleotide sequence ID" value="XM_070051263.1"/>
</dbReference>
<dbReference type="RefSeq" id="XP_069907365.1">
    <property type="nucleotide sequence ID" value="XM_070051264.1"/>
</dbReference>
<dbReference type="PDB" id="4C0S">
    <property type="method" value="X-ray"/>
    <property type="resolution" value="2.70 A"/>
    <property type="chains" value="A/B=1-463"/>
</dbReference>
<dbReference type="PDB" id="6RA9">
    <property type="method" value="X-ray"/>
    <property type="resolution" value="2.70 A"/>
    <property type="chains" value="A=1-454, B=1-461"/>
</dbReference>
<dbReference type="PDBsum" id="4C0S"/>
<dbReference type="PDBsum" id="6RA9"/>
<dbReference type="SMR" id="Q71V39"/>
<dbReference type="FunCoup" id="Q71V39">
    <property type="interactions" value="437"/>
</dbReference>
<dbReference type="IntAct" id="Q71V39">
    <property type="interactions" value="5"/>
</dbReference>
<dbReference type="MINT" id="Q71V39"/>
<dbReference type="GeneID" id="100008677"/>
<dbReference type="KEGG" id="ocu:100008677"/>
<dbReference type="CTD" id="1917"/>
<dbReference type="InParanoid" id="Q71V39"/>
<dbReference type="OrthoDB" id="342024at2759"/>
<dbReference type="EvolutionaryTrace" id="Q71V39"/>
<dbReference type="Proteomes" id="UP000001811">
    <property type="component" value="Unplaced"/>
</dbReference>
<dbReference type="GO" id="GO:0005789">
    <property type="term" value="C:endoplasmic reticulum membrane"/>
    <property type="evidence" value="ECO:0000250"/>
    <property type="project" value="UniProtKB"/>
</dbReference>
<dbReference type="GO" id="GO:0005634">
    <property type="term" value="C:nucleus"/>
    <property type="evidence" value="ECO:0007669"/>
    <property type="project" value="UniProtKB-KW"/>
</dbReference>
<dbReference type="GO" id="GO:0005525">
    <property type="term" value="F:GTP binding"/>
    <property type="evidence" value="ECO:0007669"/>
    <property type="project" value="UniProtKB-KW"/>
</dbReference>
<dbReference type="GO" id="GO:0003924">
    <property type="term" value="F:GTPase activity"/>
    <property type="evidence" value="ECO:0000314"/>
    <property type="project" value="UniProtKB"/>
</dbReference>
<dbReference type="GO" id="GO:0003746">
    <property type="term" value="F:translation elongation factor activity"/>
    <property type="evidence" value="ECO:0000314"/>
    <property type="project" value="UniProtKB"/>
</dbReference>
<dbReference type="GO" id="GO:0006414">
    <property type="term" value="P:translational elongation"/>
    <property type="evidence" value="ECO:0000314"/>
    <property type="project" value="UniProtKB"/>
</dbReference>
<dbReference type="CDD" id="cd01883">
    <property type="entry name" value="EF1_alpha"/>
    <property type="match status" value="1"/>
</dbReference>
<dbReference type="CDD" id="cd03693">
    <property type="entry name" value="EF1_alpha_II"/>
    <property type="match status" value="1"/>
</dbReference>
<dbReference type="CDD" id="cd03705">
    <property type="entry name" value="EF1_alpha_III"/>
    <property type="match status" value="1"/>
</dbReference>
<dbReference type="FunFam" id="2.40.30.10:FF:000005">
    <property type="entry name" value="Elongation factor 1-alpha"/>
    <property type="match status" value="1"/>
</dbReference>
<dbReference type="FunFam" id="3.40.50.300:FF:000090">
    <property type="entry name" value="Elongation factor 1-alpha"/>
    <property type="match status" value="1"/>
</dbReference>
<dbReference type="FunFam" id="2.40.30.10:FF:000168">
    <property type="entry name" value="Elongation factor 1-alpha 2"/>
    <property type="match status" value="1"/>
</dbReference>
<dbReference type="Gene3D" id="3.40.50.300">
    <property type="entry name" value="P-loop containing nucleotide triphosphate hydrolases"/>
    <property type="match status" value="1"/>
</dbReference>
<dbReference type="Gene3D" id="2.40.30.10">
    <property type="entry name" value="Translation factors"/>
    <property type="match status" value="2"/>
</dbReference>
<dbReference type="HAMAP" id="MF_00118_A">
    <property type="entry name" value="EF_Tu_A"/>
    <property type="match status" value="1"/>
</dbReference>
<dbReference type="InterPro" id="IPR004161">
    <property type="entry name" value="EFTu-like_2"/>
</dbReference>
<dbReference type="InterPro" id="IPR031157">
    <property type="entry name" value="G_TR_CS"/>
</dbReference>
<dbReference type="InterPro" id="IPR054696">
    <property type="entry name" value="GTP-eEF1A_C"/>
</dbReference>
<dbReference type="InterPro" id="IPR027417">
    <property type="entry name" value="P-loop_NTPase"/>
</dbReference>
<dbReference type="InterPro" id="IPR000795">
    <property type="entry name" value="T_Tr_GTP-bd_dom"/>
</dbReference>
<dbReference type="InterPro" id="IPR050100">
    <property type="entry name" value="TRAFAC_GTPase_members"/>
</dbReference>
<dbReference type="InterPro" id="IPR009000">
    <property type="entry name" value="Transl_B-barrel_sf"/>
</dbReference>
<dbReference type="InterPro" id="IPR009001">
    <property type="entry name" value="Transl_elong_EF1A/Init_IF2_C"/>
</dbReference>
<dbReference type="InterPro" id="IPR004539">
    <property type="entry name" value="Transl_elong_EF1A_euk/arc"/>
</dbReference>
<dbReference type="NCBIfam" id="TIGR00483">
    <property type="entry name" value="EF-1_alpha"/>
    <property type="match status" value="1"/>
</dbReference>
<dbReference type="NCBIfam" id="NF008969">
    <property type="entry name" value="PRK12317.1"/>
    <property type="match status" value="1"/>
</dbReference>
<dbReference type="PANTHER" id="PTHR23115">
    <property type="entry name" value="TRANSLATION FACTOR"/>
    <property type="match status" value="1"/>
</dbReference>
<dbReference type="Pfam" id="PF22594">
    <property type="entry name" value="GTP-eEF1A_C"/>
    <property type="match status" value="1"/>
</dbReference>
<dbReference type="Pfam" id="PF00009">
    <property type="entry name" value="GTP_EFTU"/>
    <property type="match status" value="1"/>
</dbReference>
<dbReference type="Pfam" id="PF03144">
    <property type="entry name" value="GTP_EFTU_D2"/>
    <property type="match status" value="1"/>
</dbReference>
<dbReference type="PRINTS" id="PR00315">
    <property type="entry name" value="ELONGATNFCT"/>
</dbReference>
<dbReference type="SUPFAM" id="SSF50465">
    <property type="entry name" value="EF-Tu/eEF-1alpha/eIF2-gamma C-terminal domain"/>
    <property type="match status" value="1"/>
</dbReference>
<dbReference type="SUPFAM" id="SSF52540">
    <property type="entry name" value="P-loop containing nucleoside triphosphate hydrolases"/>
    <property type="match status" value="1"/>
</dbReference>
<dbReference type="SUPFAM" id="SSF50447">
    <property type="entry name" value="Translation proteins"/>
    <property type="match status" value="1"/>
</dbReference>
<dbReference type="PROSITE" id="PS00301">
    <property type="entry name" value="G_TR_1"/>
    <property type="match status" value="1"/>
</dbReference>
<dbReference type="PROSITE" id="PS51722">
    <property type="entry name" value="G_TR_2"/>
    <property type="match status" value="1"/>
</dbReference>